<name>SYFB_PROMA</name>
<gene>
    <name evidence="1" type="primary">pheT</name>
    <name type="ordered locus">Pro_0966</name>
</gene>
<proteinExistence type="inferred from homology"/>
<organism>
    <name type="scientific">Prochlorococcus marinus (strain SARG / CCMP1375 / SS120)</name>
    <dbReference type="NCBI Taxonomy" id="167539"/>
    <lineage>
        <taxon>Bacteria</taxon>
        <taxon>Bacillati</taxon>
        <taxon>Cyanobacteriota</taxon>
        <taxon>Cyanophyceae</taxon>
        <taxon>Synechococcales</taxon>
        <taxon>Prochlorococcaceae</taxon>
        <taxon>Prochlorococcus</taxon>
    </lineage>
</organism>
<protein>
    <recommendedName>
        <fullName evidence="1">Phenylalanine--tRNA ligase beta subunit</fullName>
        <ecNumber evidence="1">6.1.1.20</ecNumber>
    </recommendedName>
    <alternativeName>
        <fullName evidence="1">Phenylalanyl-tRNA synthetase beta subunit</fullName>
        <shortName evidence="1">PheRS</shortName>
    </alternativeName>
</protein>
<reference key="1">
    <citation type="journal article" date="2003" name="Proc. Natl. Acad. Sci. U.S.A.">
        <title>Genome sequence of the cyanobacterium Prochlorococcus marinus SS120, a nearly minimal oxyphototrophic genome.</title>
        <authorList>
            <person name="Dufresne A."/>
            <person name="Salanoubat M."/>
            <person name="Partensky F."/>
            <person name="Artiguenave F."/>
            <person name="Axmann I.M."/>
            <person name="Barbe V."/>
            <person name="Duprat S."/>
            <person name="Galperin M.Y."/>
            <person name="Koonin E.V."/>
            <person name="Le Gall F."/>
            <person name="Makarova K.S."/>
            <person name="Ostrowski M."/>
            <person name="Oztas S."/>
            <person name="Robert C."/>
            <person name="Rogozin I.B."/>
            <person name="Scanlan D.J."/>
            <person name="Tandeau de Marsac N."/>
            <person name="Weissenbach J."/>
            <person name="Wincker P."/>
            <person name="Wolf Y.I."/>
            <person name="Hess W.R."/>
        </authorList>
    </citation>
    <scope>NUCLEOTIDE SEQUENCE [LARGE SCALE GENOMIC DNA]</scope>
    <source>
        <strain>SARG / CCMP1375 / SS120</strain>
    </source>
</reference>
<dbReference type="EC" id="6.1.1.20" evidence="1"/>
<dbReference type="EMBL" id="AE017126">
    <property type="protein sequence ID" value="AAQ00011.1"/>
    <property type="molecule type" value="Genomic_DNA"/>
</dbReference>
<dbReference type="RefSeq" id="NP_875358.1">
    <property type="nucleotide sequence ID" value="NC_005042.1"/>
</dbReference>
<dbReference type="RefSeq" id="WP_011125118.1">
    <property type="nucleotide sequence ID" value="NC_005042.1"/>
</dbReference>
<dbReference type="SMR" id="Q7VBX6"/>
<dbReference type="STRING" id="167539.Pro_0966"/>
<dbReference type="EnsemblBacteria" id="AAQ00011">
    <property type="protein sequence ID" value="AAQ00011"/>
    <property type="gene ID" value="Pro_0966"/>
</dbReference>
<dbReference type="KEGG" id="pma:Pro_0966"/>
<dbReference type="PATRIC" id="fig|167539.5.peg.1014"/>
<dbReference type="eggNOG" id="COG0072">
    <property type="taxonomic scope" value="Bacteria"/>
</dbReference>
<dbReference type="HOGENOM" id="CLU_016891_0_0_3"/>
<dbReference type="OrthoDB" id="9805455at2"/>
<dbReference type="Proteomes" id="UP000001420">
    <property type="component" value="Chromosome"/>
</dbReference>
<dbReference type="GO" id="GO:0009328">
    <property type="term" value="C:phenylalanine-tRNA ligase complex"/>
    <property type="evidence" value="ECO:0007669"/>
    <property type="project" value="TreeGrafter"/>
</dbReference>
<dbReference type="GO" id="GO:0005524">
    <property type="term" value="F:ATP binding"/>
    <property type="evidence" value="ECO:0007669"/>
    <property type="project" value="UniProtKB-UniRule"/>
</dbReference>
<dbReference type="GO" id="GO:0000287">
    <property type="term" value="F:magnesium ion binding"/>
    <property type="evidence" value="ECO:0007669"/>
    <property type="project" value="UniProtKB-UniRule"/>
</dbReference>
<dbReference type="GO" id="GO:0004826">
    <property type="term" value="F:phenylalanine-tRNA ligase activity"/>
    <property type="evidence" value="ECO:0007669"/>
    <property type="project" value="UniProtKB-UniRule"/>
</dbReference>
<dbReference type="GO" id="GO:0000049">
    <property type="term" value="F:tRNA binding"/>
    <property type="evidence" value="ECO:0007669"/>
    <property type="project" value="UniProtKB-KW"/>
</dbReference>
<dbReference type="GO" id="GO:0006432">
    <property type="term" value="P:phenylalanyl-tRNA aminoacylation"/>
    <property type="evidence" value="ECO:0007669"/>
    <property type="project" value="UniProtKB-UniRule"/>
</dbReference>
<dbReference type="CDD" id="cd00769">
    <property type="entry name" value="PheRS_beta_core"/>
    <property type="match status" value="1"/>
</dbReference>
<dbReference type="CDD" id="cd02796">
    <property type="entry name" value="tRNA_bind_bactPheRS"/>
    <property type="match status" value="1"/>
</dbReference>
<dbReference type="FunFam" id="2.40.50.140:FF:000045">
    <property type="entry name" value="Phenylalanine--tRNA ligase beta subunit"/>
    <property type="match status" value="1"/>
</dbReference>
<dbReference type="Gene3D" id="3.30.56.10">
    <property type="match status" value="2"/>
</dbReference>
<dbReference type="Gene3D" id="3.30.930.10">
    <property type="entry name" value="Bira Bifunctional Protein, Domain 2"/>
    <property type="match status" value="1"/>
</dbReference>
<dbReference type="Gene3D" id="3.30.70.380">
    <property type="entry name" value="Ferrodoxin-fold anticodon-binding domain"/>
    <property type="match status" value="1"/>
</dbReference>
<dbReference type="Gene3D" id="2.40.50.140">
    <property type="entry name" value="Nucleic acid-binding proteins"/>
    <property type="match status" value="1"/>
</dbReference>
<dbReference type="Gene3D" id="3.50.40.10">
    <property type="entry name" value="Phenylalanyl-trna Synthetase, Chain B, domain 3"/>
    <property type="match status" value="1"/>
</dbReference>
<dbReference type="HAMAP" id="MF_00283">
    <property type="entry name" value="Phe_tRNA_synth_beta1"/>
    <property type="match status" value="1"/>
</dbReference>
<dbReference type="InterPro" id="IPR045864">
    <property type="entry name" value="aa-tRNA-synth_II/BPL/LPL"/>
</dbReference>
<dbReference type="InterPro" id="IPR005146">
    <property type="entry name" value="B3/B4_tRNA-bd"/>
</dbReference>
<dbReference type="InterPro" id="IPR009061">
    <property type="entry name" value="DNA-bd_dom_put_sf"/>
</dbReference>
<dbReference type="InterPro" id="IPR005121">
    <property type="entry name" value="Fdx_antiC-bd"/>
</dbReference>
<dbReference type="InterPro" id="IPR036690">
    <property type="entry name" value="Fdx_antiC-bd_sf"/>
</dbReference>
<dbReference type="InterPro" id="IPR012340">
    <property type="entry name" value="NA-bd_OB-fold"/>
</dbReference>
<dbReference type="InterPro" id="IPR045060">
    <property type="entry name" value="Phe-tRNA-ligase_IIc_bsu"/>
</dbReference>
<dbReference type="InterPro" id="IPR004532">
    <property type="entry name" value="Phe-tRNA-ligase_IIc_bsu_bact"/>
</dbReference>
<dbReference type="InterPro" id="IPR020825">
    <property type="entry name" value="Phe-tRNA_synthase-like_B3/B4"/>
</dbReference>
<dbReference type="InterPro" id="IPR041616">
    <property type="entry name" value="PheRS_beta_core"/>
</dbReference>
<dbReference type="InterPro" id="IPR002547">
    <property type="entry name" value="tRNA-bd_dom"/>
</dbReference>
<dbReference type="InterPro" id="IPR033714">
    <property type="entry name" value="tRNA_bind_bactPheRS"/>
</dbReference>
<dbReference type="InterPro" id="IPR005147">
    <property type="entry name" value="tRNA_synthase_B5-dom"/>
</dbReference>
<dbReference type="NCBIfam" id="TIGR00472">
    <property type="entry name" value="pheT_bact"/>
    <property type="match status" value="1"/>
</dbReference>
<dbReference type="NCBIfam" id="NF045760">
    <property type="entry name" value="YtpR"/>
    <property type="match status" value="1"/>
</dbReference>
<dbReference type="PANTHER" id="PTHR10947:SF0">
    <property type="entry name" value="PHENYLALANINE--TRNA LIGASE BETA SUBUNIT"/>
    <property type="match status" value="1"/>
</dbReference>
<dbReference type="PANTHER" id="PTHR10947">
    <property type="entry name" value="PHENYLALANYL-TRNA SYNTHETASE BETA CHAIN AND LEUCINE-RICH REPEAT-CONTAINING PROTEIN 47"/>
    <property type="match status" value="1"/>
</dbReference>
<dbReference type="Pfam" id="PF03483">
    <property type="entry name" value="B3_4"/>
    <property type="match status" value="1"/>
</dbReference>
<dbReference type="Pfam" id="PF03484">
    <property type="entry name" value="B5"/>
    <property type="match status" value="1"/>
</dbReference>
<dbReference type="Pfam" id="PF03147">
    <property type="entry name" value="FDX-ACB"/>
    <property type="match status" value="1"/>
</dbReference>
<dbReference type="Pfam" id="PF01588">
    <property type="entry name" value="tRNA_bind"/>
    <property type="match status" value="1"/>
</dbReference>
<dbReference type="Pfam" id="PF17759">
    <property type="entry name" value="tRNA_synthFbeta"/>
    <property type="match status" value="1"/>
</dbReference>
<dbReference type="SMART" id="SM00873">
    <property type="entry name" value="B3_4"/>
    <property type="match status" value="1"/>
</dbReference>
<dbReference type="SMART" id="SM00874">
    <property type="entry name" value="B5"/>
    <property type="match status" value="1"/>
</dbReference>
<dbReference type="SMART" id="SM00896">
    <property type="entry name" value="FDX-ACB"/>
    <property type="match status" value="1"/>
</dbReference>
<dbReference type="SUPFAM" id="SSF54991">
    <property type="entry name" value="Anticodon-binding domain of PheRS"/>
    <property type="match status" value="1"/>
</dbReference>
<dbReference type="SUPFAM" id="SSF55681">
    <property type="entry name" value="Class II aaRS and biotin synthetases"/>
    <property type="match status" value="1"/>
</dbReference>
<dbReference type="SUPFAM" id="SSF50249">
    <property type="entry name" value="Nucleic acid-binding proteins"/>
    <property type="match status" value="1"/>
</dbReference>
<dbReference type="SUPFAM" id="SSF56037">
    <property type="entry name" value="PheT/TilS domain"/>
    <property type="match status" value="1"/>
</dbReference>
<dbReference type="SUPFAM" id="SSF46955">
    <property type="entry name" value="Putative DNA-binding domain"/>
    <property type="match status" value="1"/>
</dbReference>
<dbReference type="PROSITE" id="PS51483">
    <property type="entry name" value="B5"/>
    <property type="match status" value="1"/>
</dbReference>
<dbReference type="PROSITE" id="PS51447">
    <property type="entry name" value="FDX_ACB"/>
    <property type="match status" value="1"/>
</dbReference>
<dbReference type="PROSITE" id="PS50886">
    <property type="entry name" value="TRBD"/>
    <property type="match status" value="1"/>
</dbReference>
<keyword id="KW-0030">Aminoacyl-tRNA synthetase</keyword>
<keyword id="KW-0067">ATP-binding</keyword>
<keyword id="KW-0963">Cytoplasm</keyword>
<keyword id="KW-0436">Ligase</keyword>
<keyword id="KW-0460">Magnesium</keyword>
<keyword id="KW-0479">Metal-binding</keyword>
<keyword id="KW-0547">Nucleotide-binding</keyword>
<keyword id="KW-0648">Protein biosynthesis</keyword>
<keyword id="KW-1185">Reference proteome</keyword>
<keyword id="KW-0694">RNA-binding</keyword>
<keyword id="KW-0820">tRNA-binding</keyword>
<evidence type="ECO:0000255" key="1">
    <source>
        <dbReference type="HAMAP-Rule" id="MF_00283"/>
    </source>
</evidence>
<feature type="chain" id="PRO_0000126929" description="Phenylalanine--tRNA ligase beta subunit">
    <location>
        <begin position="1"/>
        <end position="837"/>
    </location>
</feature>
<feature type="domain" description="tRNA-binding" evidence="1">
    <location>
        <begin position="39"/>
        <end position="149"/>
    </location>
</feature>
<feature type="domain" description="B5" evidence="1">
    <location>
        <begin position="415"/>
        <end position="520"/>
    </location>
</feature>
<feature type="domain" description="FDX-ACB" evidence="1">
    <location>
        <begin position="743"/>
        <end position="836"/>
    </location>
</feature>
<feature type="binding site" evidence="1">
    <location>
        <position position="498"/>
    </location>
    <ligand>
        <name>Mg(2+)</name>
        <dbReference type="ChEBI" id="CHEBI:18420"/>
        <note>shared with alpha subunit</note>
    </ligand>
</feature>
<feature type="binding site" evidence="1">
    <location>
        <position position="504"/>
    </location>
    <ligand>
        <name>Mg(2+)</name>
        <dbReference type="ChEBI" id="CHEBI:18420"/>
        <note>shared with alpha subunit</note>
    </ligand>
</feature>
<feature type="binding site" evidence="1">
    <location>
        <position position="507"/>
    </location>
    <ligand>
        <name>Mg(2+)</name>
        <dbReference type="ChEBI" id="CHEBI:18420"/>
        <note>shared with alpha subunit</note>
    </ligand>
</feature>
<feature type="binding site" evidence="1">
    <location>
        <position position="508"/>
    </location>
    <ligand>
        <name>Mg(2+)</name>
        <dbReference type="ChEBI" id="CHEBI:18420"/>
        <note>shared with alpha subunit</note>
    </ligand>
</feature>
<comment type="catalytic activity">
    <reaction evidence="1">
        <text>tRNA(Phe) + L-phenylalanine + ATP = L-phenylalanyl-tRNA(Phe) + AMP + diphosphate + H(+)</text>
        <dbReference type="Rhea" id="RHEA:19413"/>
        <dbReference type="Rhea" id="RHEA-COMP:9668"/>
        <dbReference type="Rhea" id="RHEA-COMP:9699"/>
        <dbReference type="ChEBI" id="CHEBI:15378"/>
        <dbReference type="ChEBI" id="CHEBI:30616"/>
        <dbReference type="ChEBI" id="CHEBI:33019"/>
        <dbReference type="ChEBI" id="CHEBI:58095"/>
        <dbReference type="ChEBI" id="CHEBI:78442"/>
        <dbReference type="ChEBI" id="CHEBI:78531"/>
        <dbReference type="ChEBI" id="CHEBI:456215"/>
        <dbReference type="EC" id="6.1.1.20"/>
    </reaction>
</comment>
<comment type="cofactor">
    <cofactor evidence="1">
        <name>Mg(2+)</name>
        <dbReference type="ChEBI" id="CHEBI:18420"/>
    </cofactor>
    <text evidence="1">Binds 2 magnesium ions per tetramer.</text>
</comment>
<comment type="subunit">
    <text evidence="1">Tetramer of two alpha and two beta subunits.</text>
</comment>
<comment type="subcellular location">
    <subcellularLocation>
        <location evidence="1">Cytoplasm</location>
    </subcellularLocation>
</comment>
<comment type="similarity">
    <text evidence="1">Belongs to the phenylalanyl-tRNA synthetase beta subunit family. Type 1 subfamily.</text>
</comment>
<sequence>MKVSLSWLNELVDIHCDVEELADSLSMAGFEVEELIDLSASLEGIVTGYVIDISPHPNADKLSVCKVDIGKSEAIQIVCGAKNIRSGIHVLVATEGTYLKDIDLTIKTSHLRGQISQGMICSLSELGLPPNNDGIAILEEMNIAIPKIGVCPKKQLGLDEIIFDLAITANRPDGLSMVGIAREVSAINNTKLKLPAIDLLHKDYKEFDHNVESKKFASRNEVYSLNLIDNLNGNNDSSEEVKSRLRNAGINSINAIVDLTNYTMLEQGQPLHAFDADLLCELTGKEVTINDFGIRKAKTGENLIGIDGIDYSLSSKVDVITCSNIIIAIAGIIGGKNSCVNKETRKIWLEAALFSPSSVRISSREIGKRTESSTRFEKGISPEITISSVERCLNLLTKTFDCQILEKWINRELVIEEQLLLLRREKINKTLGKVVEHKTNINAGDNSNNIDKSGESQINTLRNIDDHEIEQSLISLGCKLQKDVKGWLVEVPANRKLDLKREIDLIEEISRLIGYDRFDSNLPNPLRPGGLTPKQKIERKVRESLTSVGFQEVVTLSLVAKDQYSKNQVAISNPLLSETSHLRTNLWQEHLNICQRNMAYEQKGCWIYEIGKIYNIDSGRINETSLLCGALVGNKSIGQWQTETKNSSLDYFQSRGILHSALNSLNINITDEKLDENQLLHPGKSSMLKLEGKELGFFGELHPSKLSDLNIDYPIYIFELNFNLILQSSTRKNKLNISFKQFPTVPSMERDIALLVDNNIQSLDISNLIIKTGRPLVEDAYLIDRYEGDNIPKGKVSQAFRIRYRKNKDTLKEEEVSPIHDKIREKLKVEFSAELRS</sequence>
<accession>Q7VBX6</accession>